<accession>Q3AYP0</accession>
<feature type="chain" id="PRO_0000321416" description="Adenine phosphoribosyltransferase">
    <location>
        <begin position="1"/>
        <end position="175"/>
    </location>
</feature>
<evidence type="ECO:0000255" key="1">
    <source>
        <dbReference type="HAMAP-Rule" id="MF_00004"/>
    </source>
</evidence>
<sequence>MSSVDLASYIRTIPDFPKPGILFRDINPMLRSPEAVAEVIRLLSLVCERTRPDLIVGIESRGFIVGAPLAHQCGLGFVPVRKPGKLPGDVVGIDYSLEYGSDRLEIQADALVGQPRVLVVDDLLATGGTAAATAQLVTQAGGELVGFAFVIELKGLGGRTVLPKDLSVDSLLAYD</sequence>
<name>APT_SYNS9</name>
<reference key="1">
    <citation type="submission" date="2005-08" db="EMBL/GenBank/DDBJ databases">
        <title>Complete sequence of Synechococcus sp. CC9902.</title>
        <authorList>
            <person name="Copeland A."/>
            <person name="Lucas S."/>
            <person name="Lapidus A."/>
            <person name="Barry K."/>
            <person name="Detter J.C."/>
            <person name="Glavina T."/>
            <person name="Hammon N."/>
            <person name="Israni S."/>
            <person name="Pitluck S."/>
            <person name="Martinez M."/>
            <person name="Schmutz J."/>
            <person name="Larimer F."/>
            <person name="Land M."/>
            <person name="Kyrpides N."/>
            <person name="Ivanova N."/>
            <person name="Richardson P."/>
        </authorList>
    </citation>
    <scope>NUCLEOTIDE SEQUENCE [LARGE SCALE GENOMIC DNA]</scope>
    <source>
        <strain>CC9902</strain>
    </source>
</reference>
<protein>
    <recommendedName>
        <fullName evidence="1">Adenine phosphoribosyltransferase</fullName>
        <shortName evidence="1">APRT</shortName>
        <ecNumber evidence="1">2.4.2.7</ecNumber>
    </recommendedName>
</protein>
<dbReference type="EC" id="2.4.2.7" evidence="1"/>
<dbReference type="EMBL" id="CP000097">
    <property type="protein sequence ID" value="ABB25787.1"/>
    <property type="molecule type" value="Genomic_DNA"/>
</dbReference>
<dbReference type="RefSeq" id="WP_011359626.1">
    <property type="nucleotide sequence ID" value="NC_007513.1"/>
</dbReference>
<dbReference type="SMR" id="Q3AYP0"/>
<dbReference type="STRING" id="316279.Syncc9902_0821"/>
<dbReference type="KEGG" id="sye:Syncc9902_0821"/>
<dbReference type="eggNOG" id="COG0503">
    <property type="taxonomic scope" value="Bacteria"/>
</dbReference>
<dbReference type="HOGENOM" id="CLU_063339_3_0_3"/>
<dbReference type="OrthoDB" id="9803963at2"/>
<dbReference type="UniPathway" id="UPA00588">
    <property type="reaction ID" value="UER00646"/>
</dbReference>
<dbReference type="Proteomes" id="UP000002712">
    <property type="component" value="Chromosome"/>
</dbReference>
<dbReference type="GO" id="GO:0005737">
    <property type="term" value="C:cytoplasm"/>
    <property type="evidence" value="ECO:0007669"/>
    <property type="project" value="UniProtKB-SubCell"/>
</dbReference>
<dbReference type="GO" id="GO:0002055">
    <property type="term" value="F:adenine binding"/>
    <property type="evidence" value="ECO:0007669"/>
    <property type="project" value="TreeGrafter"/>
</dbReference>
<dbReference type="GO" id="GO:0003999">
    <property type="term" value="F:adenine phosphoribosyltransferase activity"/>
    <property type="evidence" value="ECO:0007669"/>
    <property type="project" value="UniProtKB-UniRule"/>
</dbReference>
<dbReference type="GO" id="GO:0016208">
    <property type="term" value="F:AMP binding"/>
    <property type="evidence" value="ECO:0007669"/>
    <property type="project" value="TreeGrafter"/>
</dbReference>
<dbReference type="GO" id="GO:0006168">
    <property type="term" value="P:adenine salvage"/>
    <property type="evidence" value="ECO:0007669"/>
    <property type="project" value="InterPro"/>
</dbReference>
<dbReference type="GO" id="GO:0044209">
    <property type="term" value="P:AMP salvage"/>
    <property type="evidence" value="ECO:0007669"/>
    <property type="project" value="UniProtKB-UniRule"/>
</dbReference>
<dbReference type="GO" id="GO:0006166">
    <property type="term" value="P:purine ribonucleoside salvage"/>
    <property type="evidence" value="ECO:0007669"/>
    <property type="project" value="UniProtKB-KW"/>
</dbReference>
<dbReference type="CDD" id="cd06223">
    <property type="entry name" value="PRTases_typeI"/>
    <property type="match status" value="1"/>
</dbReference>
<dbReference type="FunFam" id="3.40.50.2020:FF:000004">
    <property type="entry name" value="Adenine phosphoribosyltransferase"/>
    <property type="match status" value="1"/>
</dbReference>
<dbReference type="Gene3D" id="3.40.50.2020">
    <property type="match status" value="1"/>
</dbReference>
<dbReference type="HAMAP" id="MF_00004">
    <property type="entry name" value="Aden_phosphoribosyltr"/>
    <property type="match status" value="1"/>
</dbReference>
<dbReference type="InterPro" id="IPR005764">
    <property type="entry name" value="Ade_phspho_trans"/>
</dbReference>
<dbReference type="InterPro" id="IPR000836">
    <property type="entry name" value="PRibTrfase_dom"/>
</dbReference>
<dbReference type="InterPro" id="IPR029057">
    <property type="entry name" value="PRTase-like"/>
</dbReference>
<dbReference type="InterPro" id="IPR050054">
    <property type="entry name" value="UPRTase/APRTase"/>
</dbReference>
<dbReference type="NCBIfam" id="TIGR01090">
    <property type="entry name" value="apt"/>
    <property type="match status" value="1"/>
</dbReference>
<dbReference type="NCBIfam" id="NF002634">
    <property type="entry name" value="PRK02304.1-3"/>
    <property type="match status" value="1"/>
</dbReference>
<dbReference type="NCBIfam" id="NF002636">
    <property type="entry name" value="PRK02304.1-5"/>
    <property type="match status" value="1"/>
</dbReference>
<dbReference type="PANTHER" id="PTHR32315">
    <property type="entry name" value="ADENINE PHOSPHORIBOSYLTRANSFERASE"/>
    <property type="match status" value="1"/>
</dbReference>
<dbReference type="PANTHER" id="PTHR32315:SF3">
    <property type="entry name" value="ADENINE PHOSPHORIBOSYLTRANSFERASE"/>
    <property type="match status" value="1"/>
</dbReference>
<dbReference type="Pfam" id="PF00156">
    <property type="entry name" value="Pribosyltran"/>
    <property type="match status" value="1"/>
</dbReference>
<dbReference type="SUPFAM" id="SSF53271">
    <property type="entry name" value="PRTase-like"/>
    <property type="match status" value="1"/>
</dbReference>
<dbReference type="PROSITE" id="PS00103">
    <property type="entry name" value="PUR_PYR_PR_TRANSFER"/>
    <property type="match status" value="1"/>
</dbReference>
<keyword id="KW-0963">Cytoplasm</keyword>
<keyword id="KW-0328">Glycosyltransferase</keyword>
<keyword id="KW-0660">Purine salvage</keyword>
<keyword id="KW-1185">Reference proteome</keyword>
<keyword id="KW-0808">Transferase</keyword>
<gene>
    <name evidence="1" type="primary">apt</name>
    <name type="ordered locus">Syncc9902_0821</name>
</gene>
<organism>
    <name type="scientific">Synechococcus sp. (strain CC9902)</name>
    <dbReference type="NCBI Taxonomy" id="316279"/>
    <lineage>
        <taxon>Bacteria</taxon>
        <taxon>Bacillati</taxon>
        <taxon>Cyanobacteriota</taxon>
        <taxon>Cyanophyceae</taxon>
        <taxon>Synechococcales</taxon>
        <taxon>Synechococcaceae</taxon>
        <taxon>Synechococcus</taxon>
    </lineage>
</organism>
<proteinExistence type="inferred from homology"/>
<comment type="function">
    <text evidence="1">Catalyzes a salvage reaction resulting in the formation of AMP, that is energically less costly than de novo synthesis.</text>
</comment>
<comment type="catalytic activity">
    <reaction evidence="1">
        <text>AMP + diphosphate = 5-phospho-alpha-D-ribose 1-diphosphate + adenine</text>
        <dbReference type="Rhea" id="RHEA:16609"/>
        <dbReference type="ChEBI" id="CHEBI:16708"/>
        <dbReference type="ChEBI" id="CHEBI:33019"/>
        <dbReference type="ChEBI" id="CHEBI:58017"/>
        <dbReference type="ChEBI" id="CHEBI:456215"/>
        <dbReference type="EC" id="2.4.2.7"/>
    </reaction>
</comment>
<comment type="pathway">
    <text evidence="1">Purine metabolism; AMP biosynthesis via salvage pathway; AMP from adenine: step 1/1.</text>
</comment>
<comment type="subunit">
    <text evidence="1">Homodimer.</text>
</comment>
<comment type="subcellular location">
    <subcellularLocation>
        <location evidence="1">Cytoplasm</location>
    </subcellularLocation>
</comment>
<comment type="similarity">
    <text evidence="1">Belongs to the purine/pyrimidine phosphoribosyltransferase family.</text>
</comment>